<keyword id="KW-0067">ATP-binding</keyword>
<keyword id="KW-1283">Bacterial microcompartment</keyword>
<keyword id="KW-0479">Metal-binding</keyword>
<keyword id="KW-0547">Nucleotide-binding</keyword>
<keyword id="KW-1185">Reference proteome</keyword>
<keyword id="KW-0808">Transferase</keyword>
<dbReference type="EC" id="2.5.1.154" evidence="1"/>
<dbReference type="EMBL" id="U00096">
    <property type="protein sequence ID" value="AAC75512.1"/>
    <property type="molecule type" value="Genomic_DNA"/>
</dbReference>
<dbReference type="EMBL" id="AP009048">
    <property type="protein sequence ID" value="BAE76717.1"/>
    <property type="molecule type" value="Genomic_DNA"/>
</dbReference>
<dbReference type="PIR" id="B65021">
    <property type="entry name" value="B65021"/>
</dbReference>
<dbReference type="RefSeq" id="NP_416954.1">
    <property type="nucleotide sequence ID" value="NC_000913.3"/>
</dbReference>
<dbReference type="RefSeq" id="WP_000651298.1">
    <property type="nucleotide sequence ID" value="NZ_STEB01000051.1"/>
</dbReference>
<dbReference type="SMR" id="P65643"/>
<dbReference type="BioGRID" id="4260919">
    <property type="interactions" value="10"/>
</dbReference>
<dbReference type="DIP" id="DIP-9543N"/>
<dbReference type="FunCoup" id="P65643">
    <property type="interactions" value="195"/>
</dbReference>
<dbReference type="IntAct" id="P65643">
    <property type="interactions" value="7"/>
</dbReference>
<dbReference type="STRING" id="511145.b2459"/>
<dbReference type="PaxDb" id="511145-b2459"/>
<dbReference type="EnsemblBacteria" id="AAC75512">
    <property type="protein sequence ID" value="AAC75512"/>
    <property type="gene ID" value="b2459"/>
</dbReference>
<dbReference type="GeneID" id="75204269"/>
<dbReference type="GeneID" id="946939"/>
<dbReference type="KEGG" id="ecj:JW2443"/>
<dbReference type="KEGG" id="eco:b2459"/>
<dbReference type="KEGG" id="ecoc:C3026_13645"/>
<dbReference type="PATRIC" id="fig|1411691.4.peg.4281"/>
<dbReference type="EchoBASE" id="EB3941"/>
<dbReference type="eggNOG" id="COG4812">
    <property type="taxonomic scope" value="Bacteria"/>
</dbReference>
<dbReference type="HOGENOM" id="CLU_093470_1_0_6"/>
<dbReference type="InParanoid" id="P65643"/>
<dbReference type="OMA" id="ACCELCH"/>
<dbReference type="OrthoDB" id="306726at2"/>
<dbReference type="PhylomeDB" id="P65643"/>
<dbReference type="BioCyc" id="EcoCyc:G7289-MONOMER"/>
<dbReference type="UniPathway" id="UPA00560"/>
<dbReference type="PRO" id="PR:P65643"/>
<dbReference type="Proteomes" id="UP000000625">
    <property type="component" value="Chromosome"/>
</dbReference>
<dbReference type="GO" id="GO:0031469">
    <property type="term" value="C:bacterial microcompartment"/>
    <property type="evidence" value="ECO:0007669"/>
    <property type="project" value="UniProtKB-SubCell"/>
</dbReference>
<dbReference type="GO" id="GO:0005524">
    <property type="term" value="F:ATP binding"/>
    <property type="evidence" value="ECO:0007669"/>
    <property type="project" value="UniProtKB-KW"/>
</dbReference>
<dbReference type="GO" id="GO:0008817">
    <property type="term" value="F:corrinoid adenosyltransferase activity"/>
    <property type="evidence" value="ECO:0007669"/>
    <property type="project" value="InterPro"/>
</dbReference>
<dbReference type="GO" id="GO:0046872">
    <property type="term" value="F:metal ion binding"/>
    <property type="evidence" value="ECO:0007669"/>
    <property type="project" value="UniProtKB-KW"/>
</dbReference>
<dbReference type="GO" id="GO:0009236">
    <property type="term" value="P:cobalamin biosynthetic process"/>
    <property type="evidence" value="ECO:0007669"/>
    <property type="project" value="InterPro"/>
</dbReference>
<dbReference type="GO" id="GO:0046336">
    <property type="term" value="P:ethanolamine catabolic process"/>
    <property type="evidence" value="ECO:0007669"/>
    <property type="project" value="UniProtKB-UniPathway"/>
</dbReference>
<dbReference type="Gene3D" id="1.20.1200.10">
    <property type="entry name" value="Cobalamin adenosyltransferase-like"/>
    <property type="match status" value="1"/>
</dbReference>
<dbReference type="InterPro" id="IPR009194">
    <property type="entry name" value="AdoTrfase_EutT"/>
</dbReference>
<dbReference type="InterPro" id="IPR016030">
    <property type="entry name" value="CblAdoTrfase-like"/>
</dbReference>
<dbReference type="InterPro" id="IPR036451">
    <property type="entry name" value="CblAdoTrfase-like_sf"/>
</dbReference>
<dbReference type="NCBIfam" id="NF011595">
    <property type="entry name" value="PRK15020.1"/>
    <property type="match status" value="1"/>
</dbReference>
<dbReference type="Pfam" id="PF01923">
    <property type="entry name" value="Cob_adeno_trans"/>
    <property type="match status" value="1"/>
</dbReference>
<dbReference type="PIRSF" id="PIRSF012294">
    <property type="entry name" value="ATR_EutT"/>
    <property type="match status" value="1"/>
</dbReference>
<dbReference type="SUPFAM" id="SSF89028">
    <property type="entry name" value="Cobalamin adenosyltransferase-like"/>
    <property type="match status" value="1"/>
</dbReference>
<proteinExistence type="inferred from homology"/>
<name>EUTT_ECOLI</name>
<sequence length="267" mass="30172">MKDFITEAWLRANHTLSEGAEIHLPADSRLTPSARELLESRHLRIKFIDEQGRLFVDDEQQQPQPVHGLTSSDEHPQACCELCRQPVAKKPDTLTHLSAEKMVAKSDPRLGFRAVLDSTIALAVWLQIELAEPWQPWLADIRSRLGNIMRADALGEPLGCQAIVGLSDEDLHRLSHQPLRYLDHDHLVPEASHGRDAALLNLLRTKVRETETVAAQVFITRSFEVLRPDILQALNRLSSTVYVMMILSVTKQPLTVKQIQQRLGETQ</sequence>
<comment type="function">
    <text evidence="1">Converts cyanocobalamin (CN-B12) to adenosylcobalamin (AdoCbl), the inducer of the eut operon. Is not active on cobinamide nor other intermediates in the adenosylcobalamin synthetic pathway. Allows full induction of the eut operon.</text>
</comment>
<comment type="catalytic activity">
    <reaction evidence="1">
        <text>2 cob(II)alamin + reduced [electron-transfer flavoprotein] + 2 ATP + 2 H2O = 2 adenosylcob(III)alamin + oxidized [electron-transfer flavoprotein] + 2 phosphate + 2 diphosphate + 3 H(+)</text>
        <dbReference type="Rhea" id="RHEA:66828"/>
        <dbReference type="Rhea" id="RHEA-COMP:10685"/>
        <dbReference type="Rhea" id="RHEA-COMP:10686"/>
        <dbReference type="ChEBI" id="CHEBI:15377"/>
        <dbReference type="ChEBI" id="CHEBI:15378"/>
        <dbReference type="ChEBI" id="CHEBI:16304"/>
        <dbReference type="ChEBI" id="CHEBI:18408"/>
        <dbReference type="ChEBI" id="CHEBI:30616"/>
        <dbReference type="ChEBI" id="CHEBI:33019"/>
        <dbReference type="ChEBI" id="CHEBI:43474"/>
        <dbReference type="ChEBI" id="CHEBI:57692"/>
        <dbReference type="ChEBI" id="CHEBI:58307"/>
        <dbReference type="EC" id="2.5.1.154"/>
    </reaction>
</comment>
<comment type="catalytic activity">
    <reaction evidence="1">
        <text>2 cob(II)inamide + reduced [electron-transfer flavoprotein] + 2 ATP + 2 H2O = 2 adenosylcob(III)inamide + oxidized [electron-transfer flavoprotein] + 2 phosphate + 2 diphosphate + 3 H(+)</text>
        <dbReference type="Rhea" id="RHEA:66824"/>
        <dbReference type="Rhea" id="RHEA-COMP:10685"/>
        <dbReference type="Rhea" id="RHEA-COMP:10686"/>
        <dbReference type="ChEBI" id="CHEBI:2480"/>
        <dbReference type="ChEBI" id="CHEBI:15377"/>
        <dbReference type="ChEBI" id="CHEBI:15378"/>
        <dbReference type="ChEBI" id="CHEBI:30616"/>
        <dbReference type="ChEBI" id="CHEBI:33019"/>
        <dbReference type="ChEBI" id="CHEBI:43474"/>
        <dbReference type="ChEBI" id="CHEBI:57692"/>
        <dbReference type="ChEBI" id="CHEBI:58307"/>
        <dbReference type="ChEBI" id="CHEBI:141013"/>
        <dbReference type="EC" id="2.5.1.154"/>
    </reaction>
</comment>
<comment type="cofactor">
    <cofactor evidence="1">
        <name>a divalent metal cation</name>
        <dbReference type="ChEBI" id="CHEBI:60240"/>
    </cofactor>
    <text evidence="1">Binds 1 divalent metal cation ion per homodimer with both subunits providing Cys ligands; Fe(2+) gives most activity and is possibly the physiological cofactor.</text>
</comment>
<comment type="pathway">
    <text>Amine and polyamine degradation; ethanolamine degradation.</text>
</comment>
<comment type="subunit">
    <text evidence="1">Homodimer.</text>
</comment>
<comment type="subcellular location">
    <subcellularLocation>
        <location evidence="2">Bacterial microcompartment</location>
    </subcellularLocation>
</comment>
<comment type="similarity">
    <text evidence="2">Belongs to the Cob(I)alamin adenosyltransferase family. EutT subfamily.</text>
</comment>
<comment type="caution">
    <text evidence="3">In strain MG1655 the eut operon is interrupted by the CPZ-55 prophage, encoding 9 genes situated between eutA and eutB, which are translated in the other direction. CPZ-55 may prevent expression of the eut operon in strain MG1655. Strain W3110 does not have this prophage element and should be able to express the operon.</text>
</comment>
<gene>
    <name type="primary">eutT</name>
    <name type="synonym">ypfB</name>
    <name type="ordered locus">b2459</name>
    <name type="ordered locus">JW2443</name>
</gene>
<evidence type="ECO:0000250" key="1">
    <source>
        <dbReference type="UniProtKB" id="Q9ZFV4"/>
    </source>
</evidence>
<evidence type="ECO:0000305" key="2"/>
<evidence type="ECO:0000305" key="3">
    <source>
    </source>
</evidence>
<protein>
    <recommendedName>
        <fullName evidence="2">Corrinoid adenosyltransferase EutT</fullName>
        <ecNumber evidence="1">2.5.1.154</ecNumber>
    </recommendedName>
    <alternativeName>
        <fullName>ATP:co(I)rrinoid adenosyltransferase</fullName>
        <shortName>ACAT</shortName>
    </alternativeName>
    <alternativeName>
        <fullName>Cob(II)alamin adenosyltransferase EutT</fullName>
    </alternativeName>
    <alternativeName>
        <fullName>Ethanolamine utilization cobalamin adenosyltransferase</fullName>
    </alternativeName>
    <alternativeName>
        <fullName>Ethanolamine utilization corrinoid adenosyltransferase</fullName>
    </alternativeName>
    <alternativeName>
        <fullName evidence="1">EutT adenosyltransferase</fullName>
    </alternativeName>
</protein>
<organism>
    <name type="scientific">Escherichia coli (strain K12)</name>
    <dbReference type="NCBI Taxonomy" id="83333"/>
    <lineage>
        <taxon>Bacteria</taxon>
        <taxon>Pseudomonadati</taxon>
        <taxon>Pseudomonadota</taxon>
        <taxon>Gammaproteobacteria</taxon>
        <taxon>Enterobacterales</taxon>
        <taxon>Enterobacteriaceae</taxon>
        <taxon>Escherichia</taxon>
    </lineage>
</organism>
<accession>P65643</accession>
<accession>P76554</accession>
<accession>Q2MAI9</accession>
<reference key="1">
    <citation type="journal article" date="1997" name="Science">
        <title>The complete genome sequence of Escherichia coli K-12.</title>
        <authorList>
            <person name="Blattner F.R."/>
            <person name="Plunkett G. III"/>
            <person name="Bloch C.A."/>
            <person name="Perna N.T."/>
            <person name="Burland V."/>
            <person name="Riley M."/>
            <person name="Collado-Vides J."/>
            <person name="Glasner J.D."/>
            <person name="Rode C.K."/>
            <person name="Mayhew G.F."/>
            <person name="Gregor J."/>
            <person name="Davis N.W."/>
            <person name="Kirkpatrick H.A."/>
            <person name="Goeden M.A."/>
            <person name="Rose D.J."/>
            <person name="Mau B."/>
            <person name="Shao Y."/>
        </authorList>
    </citation>
    <scope>NUCLEOTIDE SEQUENCE [LARGE SCALE GENOMIC DNA]</scope>
    <source>
        <strain>K12 / MG1655 / ATCC 47076</strain>
    </source>
</reference>
<reference key="2">
    <citation type="journal article" date="2006" name="Mol. Syst. Biol.">
        <title>Highly accurate genome sequences of Escherichia coli K-12 strains MG1655 and W3110.</title>
        <authorList>
            <person name="Hayashi K."/>
            <person name="Morooka N."/>
            <person name="Yamamoto Y."/>
            <person name="Fujita K."/>
            <person name="Isono K."/>
            <person name="Choi S."/>
            <person name="Ohtsubo E."/>
            <person name="Baba T."/>
            <person name="Wanner B.L."/>
            <person name="Mori H."/>
            <person name="Horiuchi T."/>
        </authorList>
    </citation>
    <scope>NUCLEOTIDE SEQUENCE [LARGE SCALE GENOMIC DNA]</scope>
    <source>
        <strain>K12 / W3110 / ATCC 27325 / DSM 5911</strain>
    </source>
</reference>
<feature type="chain" id="PRO_0000087100" description="Corrinoid adenosyltransferase EutT">
    <location>
        <begin position="1"/>
        <end position="267"/>
    </location>
</feature>
<feature type="binding site" evidence="1">
    <location>
        <position position="80"/>
    </location>
    <ligand>
        <name>a divalent metal cation</name>
        <dbReference type="ChEBI" id="CHEBI:60240"/>
        <note>ligand shared between homodimeric partners</note>
    </ligand>
</feature>
<feature type="binding site" evidence="1">
    <location>
        <position position="83"/>
    </location>
    <ligand>
        <name>a divalent metal cation</name>
        <dbReference type="ChEBI" id="CHEBI:60240"/>
        <note>ligand shared between homodimeric partners</note>
    </ligand>
</feature>